<proteinExistence type="inferred from homology"/>
<organism>
    <name type="scientific">Chelativorans sp. (strain BNC1)</name>
    <dbReference type="NCBI Taxonomy" id="266779"/>
    <lineage>
        <taxon>Bacteria</taxon>
        <taxon>Pseudomonadati</taxon>
        <taxon>Pseudomonadota</taxon>
        <taxon>Alphaproteobacteria</taxon>
        <taxon>Hyphomicrobiales</taxon>
        <taxon>Phyllobacteriaceae</taxon>
        <taxon>Chelativorans</taxon>
    </lineage>
</organism>
<comment type="function">
    <text evidence="1">Component of the acetyl coenzyme A carboxylase (ACC) complex. First, biotin carboxylase catalyzes the carboxylation of biotin on its carrier protein (BCCP) and then the CO(2) group is transferred by the carboxyltransferase to acetyl-CoA to form malonyl-CoA.</text>
</comment>
<comment type="catalytic activity">
    <reaction evidence="1">
        <text>N(6)-carboxybiotinyl-L-lysyl-[protein] + acetyl-CoA = N(6)-biotinyl-L-lysyl-[protein] + malonyl-CoA</text>
        <dbReference type="Rhea" id="RHEA:54728"/>
        <dbReference type="Rhea" id="RHEA-COMP:10505"/>
        <dbReference type="Rhea" id="RHEA-COMP:10506"/>
        <dbReference type="ChEBI" id="CHEBI:57288"/>
        <dbReference type="ChEBI" id="CHEBI:57384"/>
        <dbReference type="ChEBI" id="CHEBI:83144"/>
        <dbReference type="ChEBI" id="CHEBI:83145"/>
        <dbReference type="EC" id="2.1.3.15"/>
    </reaction>
</comment>
<comment type="pathway">
    <text evidence="1">Lipid metabolism; malonyl-CoA biosynthesis; malonyl-CoA from acetyl-CoA: step 1/1.</text>
</comment>
<comment type="subunit">
    <text evidence="1">Acetyl-CoA carboxylase is a heterohexamer composed of biotin carboxyl carrier protein (AccB), biotin carboxylase (AccC) and two subunits each of ACCase subunit alpha (AccA) and ACCase subunit beta (AccD).</text>
</comment>
<comment type="subcellular location">
    <subcellularLocation>
        <location evidence="1">Cytoplasm</location>
    </subcellularLocation>
</comment>
<comment type="similarity">
    <text evidence="1">Belongs to the AccA family.</text>
</comment>
<accession>Q11DU2</accession>
<reference key="1">
    <citation type="submission" date="2006-06" db="EMBL/GenBank/DDBJ databases">
        <title>Complete sequence of chromosome of Mesorhizobium sp. BNC1.</title>
        <authorList>
            <consortium name="US DOE Joint Genome Institute"/>
            <person name="Copeland A."/>
            <person name="Lucas S."/>
            <person name="Lapidus A."/>
            <person name="Barry K."/>
            <person name="Detter J.C."/>
            <person name="Glavina del Rio T."/>
            <person name="Hammon N."/>
            <person name="Israni S."/>
            <person name="Dalin E."/>
            <person name="Tice H."/>
            <person name="Pitluck S."/>
            <person name="Chertkov O."/>
            <person name="Brettin T."/>
            <person name="Bruce D."/>
            <person name="Han C."/>
            <person name="Tapia R."/>
            <person name="Gilna P."/>
            <person name="Schmutz J."/>
            <person name="Larimer F."/>
            <person name="Land M."/>
            <person name="Hauser L."/>
            <person name="Kyrpides N."/>
            <person name="Mikhailova N."/>
            <person name="Richardson P."/>
        </authorList>
    </citation>
    <scope>NUCLEOTIDE SEQUENCE [LARGE SCALE GENOMIC DNA]</scope>
    <source>
        <strain>BNC1</strain>
    </source>
</reference>
<keyword id="KW-0067">ATP-binding</keyword>
<keyword id="KW-0963">Cytoplasm</keyword>
<keyword id="KW-0275">Fatty acid biosynthesis</keyword>
<keyword id="KW-0276">Fatty acid metabolism</keyword>
<keyword id="KW-0444">Lipid biosynthesis</keyword>
<keyword id="KW-0443">Lipid metabolism</keyword>
<keyword id="KW-0547">Nucleotide-binding</keyword>
<keyword id="KW-0808">Transferase</keyword>
<name>ACCA_CHESB</name>
<gene>
    <name evidence="1" type="primary">accA</name>
    <name type="ordered locus">Meso_3061</name>
</gene>
<sequence>MYNYLDFEKPVADLEGKILELKKLSESGEAVDVAEEISRLERRSKDALRDVYRALTPWQKAQVARHPDRPHCMDYVRALFTDFTPLAGDRAYGEDEAVVAGFARFKGQSIAIVGQEKGNDTHSRLKHNFGMARPEGYRKAVRIMDLADRFGIPVVSLVDTAGAYPGIGAEERGQAEAIARSTSKCLSLKVPNISVIIGEGGSGGAIAIATANLVYMLEHSIYSVISPEGAASILWHDSTRAKDAATNMKITAQDLLQLKVIDGIIPEPVGGAHRASDVVIRTTGETIENGFRELAEKVGDFREQRREKFLAIGRSL</sequence>
<feature type="chain" id="PRO_1000062638" description="Acetyl-coenzyme A carboxylase carboxyl transferase subunit alpha">
    <location>
        <begin position="1"/>
        <end position="316"/>
    </location>
</feature>
<feature type="domain" description="CoA carboxyltransferase C-terminal" evidence="2">
    <location>
        <begin position="40"/>
        <end position="293"/>
    </location>
</feature>
<dbReference type="EC" id="2.1.3.15" evidence="1"/>
<dbReference type="EMBL" id="CP000390">
    <property type="protein sequence ID" value="ABG64433.1"/>
    <property type="molecule type" value="Genomic_DNA"/>
</dbReference>
<dbReference type="SMR" id="Q11DU2"/>
<dbReference type="STRING" id="266779.Meso_3061"/>
<dbReference type="KEGG" id="mes:Meso_3061"/>
<dbReference type="eggNOG" id="COG0825">
    <property type="taxonomic scope" value="Bacteria"/>
</dbReference>
<dbReference type="HOGENOM" id="CLU_015486_0_2_5"/>
<dbReference type="OrthoDB" id="9808023at2"/>
<dbReference type="UniPathway" id="UPA00655">
    <property type="reaction ID" value="UER00711"/>
</dbReference>
<dbReference type="GO" id="GO:0009317">
    <property type="term" value="C:acetyl-CoA carboxylase complex"/>
    <property type="evidence" value="ECO:0007669"/>
    <property type="project" value="InterPro"/>
</dbReference>
<dbReference type="GO" id="GO:0003989">
    <property type="term" value="F:acetyl-CoA carboxylase activity"/>
    <property type="evidence" value="ECO:0007669"/>
    <property type="project" value="InterPro"/>
</dbReference>
<dbReference type="GO" id="GO:0005524">
    <property type="term" value="F:ATP binding"/>
    <property type="evidence" value="ECO:0007669"/>
    <property type="project" value="UniProtKB-KW"/>
</dbReference>
<dbReference type="GO" id="GO:0016743">
    <property type="term" value="F:carboxyl- or carbamoyltransferase activity"/>
    <property type="evidence" value="ECO:0007669"/>
    <property type="project" value="UniProtKB-UniRule"/>
</dbReference>
<dbReference type="GO" id="GO:0006633">
    <property type="term" value="P:fatty acid biosynthetic process"/>
    <property type="evidence" value="ECO:0007669"/>
    <property type="project" value="UniProtKB-KW"/>
</dbReference>
<dbReference type="GO" id="GO:2001295">
    <property type="term" value="P:malonyl-CoA biosynthetic process"/>
    <property type="evidence" value="ECO:0007669"/>
    <property type="project" value="UniProtKB-UniRule"/>
</dbReference>
<dbReference type="Gene3D" id="3.90.226.10">
    <property type="entry name" value="2-enoyl-CoA Hydratase, Chain A, domain 1"/>
    <property type="match status" value="1"/>
</dbReference>
<dbReference type="HAMAP" id="MF_00823">
    <property type="entry name" value="AcetylCoA_CT_alpha"/>
    <property type="match status" value="1"/>
</dbReference>
<dbReference type="InterPro" id="IPR001095">
    <property type="entry name" value="Acetyl_CoA_COase_a_su"/>
</dbReference>
<dbReference type="InterPro" id="IPR029045">
    <property type="entry name" value="ClpP/crotonase-like_dom_sf"/>
</dbReference>
<dbReference type="InterPro" id="IPR011763">
    <property type="entry name" value="COA_CT_C"/>
</dbReference>
<dbReference type="NCBIfam" id="TIGR00513">
    <property type="entry name" value="accA"/>
    <property type="match status" value="1"/>
</dbReference>
<dbReference type="NCBIfam" id="NF041504">
    <property type="entry name" value="AccA_sub"/>
    <property type="match status" value="1"/>
</dbReference>
<dbReference type="NCBIfam" id="NF004344">
    <property type="entry name" value="PRK05724.1"/>
    <property type="match status" value="1"/>
</dbReference>
<dbReference type="PANTHER" id="PTHR42853">
    <property type="entry name" value="ACETYL-COENZYME A CARBOXYLASE CARBOXYL TRANSFERASE SUBUNIT ALPHA"/>
    <property type="match status" value="1"/>
</dbReference>
<dbReference type="PANTHER" id="PTHR42853:SF3">
    <property type="entry name" value="ACETYL-COENZYME A CARBOXYLASE CARBOXYL TRANSFERASE SUBUNIT ALPHA, CHLOROPLASTIC"/>
    <property type="match status" value="1"/>
</dbReference>
<dbReference type="Pfam" id="PF03255">
    <property type="entry name" value="ACCA"/>
    <property type="match status" value="1"/>
</dbReference>
<dbReference type="PRINTS" id="PR01069">
    <property type="entry name" value="ACCCTRFRASEA"/>
</dbReference>
<dbReference type="SUPFAM" id="SSF52096">
    <property type="entry name" value="ClpP/crotonase"/>
    <property type="match status" value="1"/>
</dbReference>
<dbReference type="PROSITE" id="PS50989">
    <property type="entry name" value="COA_CT_CTER"/>
    <property type="match status" value="1"/>
</dbReference>
<evidence type="ECO:0000255" key="1">
    <source>
        <dbReference type="HAMAP-Rule" id="MF_00823"/>
    </source>
</evidence>
<evidence type="ECO:0000255" key="2">
    <source>
        <dbReference type="PROSITE-ProRule" id="PRU01137"/>
    </source>
</evidence>
<protein>
    <recommendedName>
        <fullName evidence="1">Acetyl-coenzyme A carboxylase carboxyl transferase subunit alpha</fullName>
        <shortName evidence="1">ACCase subunit alpha</shortName>
        <shortName evidence="1">Acetyl-CoA carboxylase carboxyltransferase subunit alpha</shortName>
        <ecNumber evidence="1">2.1.3.15</ecNumber>
    </recommendedName>
</protein>